<protein>
    <recommendedName>
        <fullName evidence="1">ATP-dependent DNA helicase PIF1</fullName>
        <ecNumber evidence="1">5.6.2.3</ecNumber>
    </recommendedName>
    <alternativeName>
        <fullName evidence="1">DNA 5'-3' helicase PIF1</fullName>
    </alternativeName>
    <alternativeName>
        <fullName evidence="1">DNA repair and recombination helicase PIF1</fullName>
    </alternativeName>
</protein>
<gene>
    <name type="primary">pif1</name>
    <name type="ORF">zgc:56161</name>
</gene>
<dbReference type="EC" id="5.6.2.3" evidence="1"/>
<dbReference type="EMBL" id="BC045956">
    <property type="protein sequence ID" value="AAH45956.1"/>
    <property type="molecule type" value="mRNA"/>
</dbReference>
<dbReference type="RefSeq" id="NP_942102.1">
    <property type="nucleotide sequence ID" value="NM_198807.1"/>
</dbReference>
<dbReference type="SMR" id="Q7ZV90"/>
<dbReference type="FunCoup" id="Q7ZV90">
    <property type="interactions" value="299"/>
</dbReference>
<dbReference type="STRING" id="7955.ENSDARP00000022087"/>
<dbReference type="PaxDb" id="7955-ENSDARP00000022087"/>
<dbReference type="GeneID" id="326729"/>
<dbReference type="KEGG" id="dre:326729"/>
<dbReference type="AGR" id="ZFIN:ZDB-GENE-030131-4928"/>
<dbReference type="CTD" id="80119"/>
<dbReference type="ZFIN" id="ZDB-GENE-030131-4928">
    <property type="gene designation" value="pif1"/>
</dbReference>
<dbReference type="eggNOG" id="KOG0987">
    <property type="taxonomic scope" value="Eukaryota"/>
</dbReference>
<dbReference type="InParanoid" id="Q7ZV90"/>
<dbReference type="OrthoDB" id="272985at2759"/>
<dbReference type="PhylomeDB" id="Q7ZV90"/>
<dbReference type="PRO" id="PR:Q7ZV90"/>
<dbReference type="Proteomes" id="UP000000437">
    <property type="component" value="Chromosome 2"/>
</dbReference>
<dbReference type="GO" id="GO:0005739">
    <property type="term" value="C:mitochondrion"/>
    <property type="evidence" value="ECO:0007669"/>
    <property type="project" value="UniProtKB-SubCell"/>
</dbReference>
<dbReference type="GO" id="GO:0005634">
    <property type="term" value="C:nucleus"/>
    <property type="evidence" value="ECO:0007669"/>
    <property type="project" value="UniProtKB-SubCell"/>
</dbReference>
<dbReference type="GO" id="GO:0043139">
    <property type="term" value="F:5'-3' DNA helicase activity"/>
    <property type="evidence" value="ECO:0000318"/>
    <property type="project" value="GO_Central"/>
</dbReference>
<dbReference type="GO" id="GO:0005524">
    <property type="term" value="F:ATP binding"/>
    <property type="evidence" value="ECO:0007669"/>
    <property type="project" value="UniProtKB-UniRule"/>
</dbReference>
<dbReference type="GO" id="GO:0016887">
    <property type="term" value="F:ATP hydrolysis activity"/>
    <property type="evidence" value="ECO:0007669"/>
    <property type="project" value="InterPro"/>
</dbReference>
<dbReference type="GO" id="GO:0003677">
    <property type="term" value="F:DNA binding"/>
    <property type="evidence" value="ECO:0007669"/>
    <property type="project" value="UniProtKB-KW"/>
</dbReference>
<dbReference type="GO" id="GO:0006310">
    <property type="term" value="P:DNA recombination"/>
    <property type="evidence" value="ECO:0007669"/>
    <property type="project" value="UniProtKB-UniRule"/>
</dbReference>
<dbReference type="GO" id="GO:0006281">
    <property type="term" value="P:DNA repair"/>
    <property type="evidence" value="ECO:0007669"/>
    <property type="project" value="UniProtKB-UniRule"/>
</dbReference>
<dbReference type="GO" id="GO:0000002">
    <property type="term" value="P:mitochondrial genome maintenance"/>
    <property type="evidence" value="ECO:0007669"/>
    <property type="project" value="UniProtKB-UniRule"/>
</dbReference>
<dbReference type="GO" id="GO:0000723">
    <property type="term" value="P:telomere maintenance"/>
    <property type="evidence" value="ECO:0007669"/>
    <property type="project" value="InterPro"/>
</dbReference>
<dbReference type="CDD" id="cd18037">
    <property type="entry name" value="DEXSc_Pif1_like"/>
    <property type="match status" value="1"/>
</dbReference>
<dbReference type="CDD" id="cd18809">
    <property type="entry name" value="SF1_C_RecD"/>
    <property type="match status" value="1"/>
</dbReference>
<dbReference type="FunFam" id="3.40.50.300:FF:000805">
    <property type="entry name" value="ATP-dependent DNA helicase PIF1"/>
    <property type="match status" value="1"/>
</dbReference>
<dbReference type="FunFam" id="3.40.50.300:FF:003367">
    <property type="entry name" value="ATP-dependent DNA helicase PIF1"/>
    <property type="match status" value="1"/>
</dbReference>
<dbReference type="Gene3D" id="3.40.50.300">
    <property type="entry name" value="P-loop containing nucleotide triphosphate hydrolases"/>
    <property type="match status" value="2"/>
</dbReference>
<dbReference type="HAMAP" id="MF_03176">
    <property type="entry name" value="PIF1"/>
    <property type="match status" value="1"/>
</dbReference>
<dbReference type="InterPro" id="IPR003593">
    <property type="entry name" value="AAA+_ATPase"/>
</dbReference>
<dbReference type="InterPro" id="IPR010285">
    <property type="entry name" value="DNA_helicase_pif1-like_DEAD"/>
</dbReference>
<dbReference type="InterPro" id="IPR027417">
    <property type="entry name" value="P-loop_NTPase"/>
</dbReference>
<dbReference type="InterPro" id="IPR049163">
    <property type="entry name" value="Pif1-like_2B_dom"/>
</dbReference>
<dbReference type="InterPro" id="IPR051055">
    <property type="entry name" value="PIF1_helicase"/>
</dbReference>
<dbReference type="InterPro" id="IPR048293">
    <property type="entry name" value="PIF1_RRM3_pfh1"/>
</dbReference>
<dbReference type="PANTHER" id="PTHR47642">
    <property type="entry name" value="ATP-DEPENDENT DNA HELICASE"/>
    <property type="match status" value="1"/>
</dbReference>
<dbReference type="PANTHER" id="PTHR47642:SF7">
    <property type="entry name" value="ATP-DEPENDENT DNA HELICASE PIF1"/>
    <property type="match status" value="1"/>
</dbReference>
<dbReference type="Pfam" id="PF25344">
    <property type="entry name" value="PH_LRR1"/>
    <property type="match status" value="1"/>
</dbReference>
<dbReference type="Pfam" id="PF05970">
    <property type="entry name" value="PIF1"/>
    <property type="match status" value="1"/>
</dbReference>
<dbReference type="Pfam" id="PF21530">
    <property type="entry name" value="Pif1_2B_dom"/>
    <property type="match status" value="1"/>
</dbReference>
<dbReference type="SMART" id="SM00382">
    <property type="entry name" value="AAA"/>
    <property type="match status" value="1"/>
</dbReference>
<dbReference type="SUPFAM" id="SSF52540">
    <property type="entry name" value="P-loop containing nucleoside triphosphate hydrolases"/>
    <property type="match status" value="2"/>
</dbReference>
<accession>Q7ZV90</accession>
<organism>
    <name type="scientific">Danio rerio</name>
    <name type="common">Zebrafish</name>
    <name type="synonym">Brachydanio rerio</name>
    <dbReference type="NCBI Taxonomy" id="7955"/>
    <lineage>
        <taxon>Eukaryota</taxon>
        <taxon>Metazoa</taxon>
        <taxon>Chordata</taxon>
        <taxon>Craniata</taxon>
        <taxon>Vertebrata</taxon>
        <taxon>Euteleostomi</taxon>
        <taxon>Actinopterygii</taxon>
        <taxon>Neopterygii</taxon>
        <taxon>Teleostei</taxon>
        <taxon>Ostariophysi</taxon>
        <taxon>Cypriniformes</taxon>
        <taxon>Danionidae</taxon>
        <taxon>Danioninae</taxon>
        <taxon>Danio</taxon>
    </lineage>
</organism>
<sequence length="639" mass="71411">MLGQMEPAELQCTVAVERLNPAGQAIKRQLIRKGTVTLGRNEFQEMILRVHDGKAPQNFMLRDFQLFTRFAKDGKCTVKFVPENTQVLVSDCPPDRLKMFLKTLSIKHQASQSSKPLSDREKLRAGLPRAFETVSPLQLKDVEKANELRSRVNAPMQPRCLAERPVNKVLGDRKQVKRPRPDCDASPVKALHPNKKPVLVLPVAQKLSKEQTAVLNAVLSGKNVFFTGSAGTGKSFLLKRIVGSLPPKSTYATASTGVAACHIGGTTLHSFAGIGSGSAPLEQCIELAQRPGVLRHWTSCKHLIIDEISMVEAEFFDKLEAIARSIRRSTEPFGGIQLIVCGDFLQLPPVTKGKEKANFCFQSRSWRKCIHMNMELMEVRRQTDKTFISLLQAVRVGRVTEEVTAQLLKSANHCIERDGILATRLCTHKDDVELTNENKLKQLPGVVRMYEAVDSDPMLVQTIDAQSPVSRLLQLKVGAQVMLTKNLDVQRGLVNGARGVVVDFQPGNQGLPRVRFLCGAVEVMKRERWMFKAPGGLYLSRQQLPLKLAWAISIHKSQGMTLDCVEISLARVFESGQAYVALSRARSLEGLRVMDFDPRVVQANQDVLIFYKRLRKERLLMQSSMNDFVGQSNKENSRW</sequence>
<evidence type="ECO:0000255" key="1">
    <source>
        <dbReference type="HAMAP-Rule" id="MF_03176"/>
    </source>
</evidence>
<name>PIF1_DANRE</name>
<reference key="1">
    <citation type="submission" date="2003-01" db="EMBL/GenBank/DDBJ databases">
        <authorList>
            <consortium name="NIH - Zebrafish Gene Collection (ZGC) project"/>
        </authorList>
    </citation>
    <scope>NUCLEOTIDE SEQUENCE [LARGE SCALE MRNA]</scope>
</reference>
<keyword id="KW-0067">ATP-binding</keyword>
<keyword id="KW-0227">DNA damage</keyword>
<keyword id="KW-0233">DNA recombination</keyword>
<keyword id="KW-0234">DNA repair</keyword>
<keyword id="KW-0238">DNA-binding</keyword>
<keyword id="KW-0347">Helicase</keyword>
<keyword id="KW-0378">Hydrolase</keyword>
<keyword id="KW-0413">Isomerase</keyword>
<keyword id="KW-0496">Mitochondrion</keyword>
<keyword id="KW-0547">Nucleotide-binding</keyword>
<keyword id="KW-0539">Nucleus</keyword>
<keyword id="KW-1185">Reference proteome</keyword>
<proteinExistence type="evidence at transcript level"/>
<feature type="chain" id="PRO_0000295093" description="ATP-dependent DNA helicase PIF1">
    <location>
        <begin position="1"/>
        <end position="639"/>
    </location>
</feature>
<feature type="DNA-binding region" evidence="1">
    <location>
        <begin position="577"/>
        <end position="596"/>
    </location>
</feature>
<feature type="binding site" evidence="1">
    <location>
        <begin position="228"/>
        <end position="235"/>
    </location>
    <ligand>
        <name>ATP</name>
        <dbReference type="ChEBI" id="CHEBI:30616"/>
    </ligand>
</feature>
<comment type="function">
    <text evidence="1">DNA-dependent ATPase and 5'-3' DNA helicase required for the maintenance of both mitochondrial and nuclear genome stability.</text>
</comment>
<comment type="catalytic activity">
    <reaction evidence="1">
        <text>Couples ATP hydrolysis with the unwinding of duplex DNA at the replication fork by translocating in the 5'-3' direction. This creates two antiparallel DNA single strands (ssDNA). The leading ssDNA polymer is the template for DNA polymerase III holoenzyme which synthesizes a continuous strand.</text>
        <dbReference type="EC" id="5.6.2.3"/>
    </reaction>
</comment>
<comment type="catalytic activity">
    <reaction evidence="1">
        <text>ATP + H2O = ADP + phosphate + H(+)</text>
        <dbReference type="Rhea" id="RHEA:13065"/>
        <dbReference type="ChEBI" id="CHEBI:15377"/>
        <dbReference type="ChEBI" id="CHEBI:15378"/>
        <dbReference type="ChEBI" id="CHEBI:30616"/>
        <dbReference type="ChEBI" id="CHEBI:43474"/>
        <dbReference type="ChEBI" id="CHEBI:456216"/>
        <dbReference type="EC" id="5.6.2.3"/>
    </reaction>
</comment>
<comment type="cofactor">
    <cofactor evidence="1">
        <name>Mg(2+)</name>
        <dbReference type="ChEBI" id="CHEBI:18420"/>
    </cofactor>
</comment>
<comment type="subunit">
    <text evidence="1">Monomer.</text>
</comment>
<comment type="subcellular location">
    <subcellularLocation>
        <location evidence="1">Nucleus</location>
    </subcellularLocation>
    <subcellularLocation>
        <location evidence="1">Mitochondrion</location>
    </subcellularLocation>
</comment>
<comment type="similarity">
    <text evidence="1">Belongs to the helicase family. PIF1 subfamily.</text>
</comment>